<comment type="function">
    <text evidence="1">Essential for the assembly of ubiquinol-cytochrome c reductase. It has a direct effect on the correct occurrence of the Rieske protein, core 4, core 5 and apocytochrome b (By similarity).</text>
</comment>
<comment type="subcellular location">
    <subcellularLocation>
        <location evidence="1">Mitochondrion inner membrane</location>
        <topology evidence="1">Single-pass membrane protein</topology>
    </subcellularLocation>
</comment>
<comment type="similarity">
    <text evidence="3">Belongs to the CBP4 family.</text>
</comment>
<feature type="chain" id="PRO_0000330137" description="Assembly factor cbp4">
    <location>
        <begin position="1"/>
        <end position="72"/>
    </location>
</feature>
<feature type="transmembrane region" description="Helical" evidence="2">
    <location>
        <begin position="8"/>
        <end position="24"/>
    </location>
</feature>
<reference key="1">
    <citation type="journal article" date="2002" name="Nature">
        <title>The genome sequence of Schizosaccharomyces pombe.</title>
        <authorList>
            <person name="Wood V."/>
            <person name="Gwilliam R."/>
            <person name="Rajandream M.A."/>
            <person name="Lyne M.H."/>
            <person name="Lyne R."/>
            <person name="Stewart A."/>
            <person name="Sgouros J.G."/>
            <person name="Peat N."/>
            <person name="Hayles J."/>
            <person name="Baker S.G."/>
            <person name="Basham D."/>
            <person name="Bowman S."/>
            <person name="Brooks K."/>
            <person name="Brown D."/>
            <person name="Brown S."/>
            <person name="Chillingworth T."/>
            <person name="Churcher C.M."/>
            <person name="Collins M."/>
            <person name="Connor R."/>
            <person name="Cronin A."/>
            <person name="Davis P."/>
            <person name="Feltwell T."/>
            <person name="Fraser A."/>
            <person name="Gentles S."/>
            <person name="Goble A."/>
            <person name="Hamlin N."/>
            <person name="Harris D.E."/>
            <person name="Hidalgo J."/>
            <person name="Hodgson G."/>
            <person name="Holroyd S."/>
            <person name="Hornsby T."/>
            <person name="Howarth S."/>
            <person name="Huckle E.J."/>
            <person name="Hunt S."/>
            <person name="Jagels K."/>
            <person name="James K.D."/>
            <person name="Jones L."/>
            <person name="Jones M."/>
            <person name="Leather S."/>
            <person name="McDonald S."/>
            <person name="McLean J."/>
            <person name="Mooney P."/>
            <person name="Moule S."/>
            <person name="Mungall K.L."/>
            <person name="Murphy L.D."/>
            <person name="Niblett D."/>
            <person name="Odell C."/>
            <person name="Oliver K."/>
            <person name="O'Neil S."/>
            <person name="Pearson D."/>
            <person name="Quail M.A."/>
            <person name="Rabbinowitsch E."/>
            <person name="Rutherford K.M."/>
            <person name="Rutter S."/>
            <person name="Saunders D."/>
            <person name="Seeger K."/>
            <person name="Sharp S."/>
            <person name="Skelton J."/>
            <person name="Simmonds M.N."/>
            <person name="Squares R."/>
            <person name="Squares S."/>
            <person name="Stevens K."/>
            <person name="Taylor K."/>
            <person name="Taylor R.G."/>
            <person name="Tivey A."/>
            <person name="Walsh S.V."/>
            <person name="Warren T."/>
            <person name="Whitehead S."/>
            <person name="Woodward J.R."/>
            <person name="Volckaert G."/>
            <person name="Aert R."/>
            <person name="Robben J."/>
            <person name="Grymonprez B."/>
            <person name="Weltjens I."/>
            <person name="Vanstreels E."/>
            <person name="Rieger M."/>
            <person name="Schaefer M."/>
            <person name="Mueller-Auer S."/>
            <person name="Gabel C."/>
            <person name="Fuchs M."/>
            <person name="Duesterhoeft A."/>
            <person name="Fritzc C."/>
            <person name="Holzer E."/>
            <person name="Moestl D."/>
            <person name="Hilbert H."/>
            <person name="Borzym K."/>
            <person name="Langer I."/>
            <person name="Beck A."/>
            <person name="Lehrach H."/>
            <person name="Reinhardt R."/>
            <person name="Pohl T.M."/>
            <person name="Eger P."/>
            <person name="Zimmermann W."/>
            <person name="Wedler H."/>
            <person name="Wambutt R."/>
            <person name="Purnelle B."/>
            <person name="Goffeau A."/>
            <person name="Cadieu E."/>
            <person name="Dreano S."/>
            <person name="Gloux S."/>
            <person name="Lelaure V."/>
            <person name="Mottier S."/>
            <person name="Galibert F."/>
            <person name="Aves S.J."/>
            <person name="Xiang Z."/>
            <person name="Hunt C."/>
            <person name="Moore K."/>
            <person name="Hurst S.M."/>
            <person name="Lucas M."/>
            <person name="Rochet M."/>
            <person name="Gaillardin C."/>
            <person name="Tallada V.A."/>
            <person name="Garzon A."/>
            <person name="Thode G."/>
            <person name="Daga R.R."/>
            <person name="Cruzado L."/>
            <person name="Jimenez J."/>
            <person name="Sanchez M."/>
            <person name="del Rey F."/>
            <person name="Benito J."/>
            <person name="Dominguez A."/>
            <person name="Revuelta J.L."/>
            <person name="Moreno S."/>
            <person name="Armstrong J."/>
            <person name="Forsburg S.L."/>
            <person name="Cerutti L."/>
            <person name="Lowe T."/>
            <person name="McCombie W.R."/>
            <person name="Paulsen I."/>
            <person name="Potashkin J."/>
            <person name="Shpakovski G.V."/>
            <person name="Ussery D."/>
            <person name="Barrell B.G."/>
            <person name="Nurse P."/>
        </authorList>
    </citation>
    <scope>NUCLEOTIDE SEQUENCE [LARGE SCALE GENOMIC DNA]</scope>
    <source>
        <strain>972 / ATCC 24843</strain>
    </source>
</reference>
<reference key="2">
    <citation type="journal article" date="2006" name="Nat. Biotechnol.">
        <title>ORFeome cloning and global analysis of protein localization in the fission yeast Schizosaccharomyces pombe.</title>
        <authorList>
            <person name="Matsuyama A."/>
            <person name="Arai R."/>
            <person name="Yashiroda Y."/>
            <person name="Shirai A."/>
            <person name="Kamata A."/>
            <person name="Sekido S."/>
            <person name="Kobayashi Y."/>
            <person name="Hashimoto A."/>
            <person name="Hamamoto M."/>
            <person name="Hiraoka Y."/>
            <person name="Horinouchi S."/>
            <person name="Yoshida M."/>
        </authorList>
    </citation>
    <scope>SUBCELLULAR LOCATION [LARGE SCALE ANALYSIS]</scope>
</reference>
<protein>
    <recommendedName>
        <fullName>Assembly factor cbp4</fullName>
    </recommendedName>
    <alternativeName>
        <fullName>Cytochrome b mRNA-processing protein 4</fullName>
    </alternativeName>
</protein>
<keyword id="KW-0143">Chaperone</keyword>
<keyword id="KW-0175">Coiled coil</keyword>
<keyword id="KW-0472">Membrane</keyword>
<keyword id="KW-0496">Mitochondrion</keyword>
<keyword id="KW-0999">Mitochondrion inner membrane</keyword>
<keyword id="KW-1185">Reference proteome</keyword>
<keyword id="KW-0812">Transmembrane</keyword>
<keyword id="KW-1133">Transmembrane helix</keyword>
<proteinExistence type="inferred from homology"/>
<gene>
    <name type="primary">cbp4</name>
    <name type="ORF">SPBC27B12.14</name>
</gene>
<sequence>MNRVVKSIVYGVGIVGFGYMTMKLTTPSPERVVNSLPPDLRASYEMNKKDRSQAEGVLRMIEDAKRNPKNLV</sequence>
<accession>Q9USV6</accession>
<name>CBP4_SCHPO</name>
<dbReference type="EMBL" id="CU329671">
    <property type="protein sequence ID" value="CAB61843.1"/>
    <property type="molecule type" value="Genomic_DNA"/>
</dbReference>
<dbReference type="RefSeq" id="NP_595544.1">
    <property type="nucleotide sequence ID" value="NM_001021455.2"/>
</dbReference>
<dbReference type="SMR" id="Q9USV6"/>
<dbReference type="BioGRID" id="277116">
    <property type="interactions" value="1"/>
</dbReference>
<dbReference type="STRING" id="284812.Q9USV6"/>
<dbReference type="PaxDb" id="4896-SPBC27B12.14.1"/>
<dbReference type="EnsemblFungi" id="SPBC27B12.14.1">
    <property type="protein sequence ID" value="SPBC27B12.14.1:pep"/>
    <property type="gene ID" value="SPBC27B12.14"/>
</dbReference>
<dbReference type="GeneID" id="2540590"/>
<dbReference type="KEGG" id="spo:2540590"/>
<dbReference type="PomBase" id="SPBC27B12.14">
    <property type="gene designation" value="cbp4"/>
</dbReference>
<dbReference type="VEuPathDB" id="FungiDB:SPBC27B12.14"/>
<dbReference type="HOGENOM" id="CLU_2723638_0_0_1"/>
<dbReference type="InParanoid" id="Q9USV6"/>
<dbReference type="OMA" id="YMTMKLT"/>
<dbReference type="PRO" id="PR:Q9USV6"/>
<dbReference type="Proteomes" id="UP000002485">
    <property type="component" value="Chromosome II"/>
</dbReference>
<dbReference type="GO" id="GO:0005743">
    <property type="term" value="C:mitochondrial inner membrane"/>
    <property type="evidence" value="ECO:0000250"/>
    <property type="project" value="PomBase"/>
</dbReference>
<dbReference type="GO" id="GO:0005739">
    <property type="term" value="C:mitochondrion"/>
    <property type="evidence" value="ECO:0007005"/>
    <property type="project" value="PomBase"/>
</dbReference>
<dbReference type="GO" id="GO:0034551">
    <property type="term" value="P:mitochondrial respiratory chain complex III assembly"/>
    <property type="evidence" value="ECO:0000266"/>
    <property type="project" value="PomBase"/>
</dbReference>
<dbReference type="InterPro" id="IPR012420">
    <property type="entry name" value="Cbp4"/>
</dbReference>
<dbReference type="Pfam" id="PF07960">
    <property type="entry name" value="CBP4"/>
    <property type="match status" value="1"/>
</dbReference>
<evidence type="ECO:0000250" key="1"/>
<evidence type="ECO:0000255" key="2"/>
<evidence type="ECO:0000305" key="3"/>
<organism>
    <name type="scientific">Schizosaccharomyces pombe (strain 972 / ATCC 24843)</name>
    <name type="common">Fission yeast</name>
    <dbReference type="NCBI Taxonomy" id="284812"/>
    <lineage>
        <taxon>Eukaryota</taxon>
        <taxon>Fungi</taxon>
        <taxon>Dikarya</taxon>
        <taxon>Ascomycota</taxon>
        <taxon>Taphrinomycotina</taxon>
        <taxon>Schizosaccharomycetes</taxon>
        <taxon>Schizosaccharomycetales</taxon>
        <taxon>Schizosaccharomycetaceae</taxon>
        <taxon>Schizosaccharomyces</taxon>
    </lineage>
</organism>